<accession>B1W0Y8</accession>
<protein>
    <recommendedName>
        <fullName evidence="1">UvrABC system protein C</fullName>
        <shortName evidence="1">Protein UvrC</shortName>
    </recommendedName>
    <alternativeName>
        <fullName evidence="1">Excinuclease ABC subunit C</fullName>
    </alternativeName>
</protein>
<evidence type="ECO:0000255" key="1">
    <source>
        <dbReference type="HAMAP-Rule" id="MF_00203"/>
    </source>
</evidence>
<evidence type="ECO:0000256" key="2">
    <source>
        <dbReference type="SAM" id="MobiDB-lite"/>
    </source>
</evidence>
<organism>
    <name type="scientific">Streptomyces griseus subsp. griseus (strain JCM 4626 / CBS 651.72 / NBRC 13350 / KCC S-0626 / ISP 5235)</name>
    <dbReference type="NCBI Taxonomy" id="455632"/>
    <lineage>
        <taxon>Bacteria</taxon>
        <taxon>Bacillati</taxon>
        <taxon>Actinomycetota</taxon>
        <taxon>Actinomycetes</taxon>
        <taxon>Kitasatosporales</taxon>
        <taxon>Streptomycetaceae</taxon>
        <taxon>Streptomyces</taxon>
    </lineage>
</organism>
<sequence>MADPSSYRPKPGQIPDSPGVYKFRDEHRRVIYVGKAKNLRQRVANYFQDLANLHPRTRTMVTTAASVEWTVVSTEVEALQLEYSWIKEFDPRFNVKYRDDKSYPYLAVTLNEEFPRVQVMRGAKKKGVRYFGPYGHAWAIRETVDLMLRVFPVRTCSAGVFKNAARTGRPCLLGYIGKCSAPCVGRVTPEEHRELAEDFCDFMAGRTGTYIRRLEKDMMQAAEEMEYERAARLRDDAEALKRAMEKSAVVLADATDADLIAVAEDELEAALQIFHVRGGRVRGQRGWVTDKVEAVDTSGLVEHALQQLYGEERGDAVPKEVLVPALPEDPEAVSQWLADRRGSQVSLRIPQRGDKKDLMATVQRNAQQALGLHKTKRASDLTTRSRALEEIAEALGLDTAPLRIECYDISHLQGDDVVASMVVFEDGLARKSEYRRFQIKGFEGQDDVRSMHEVIGRRFKRYLQDKERTGEWEEAPEAAPGSASVHASATGPAATGQATAGPAAMGQAAAGPVSTGPAATGPVPAPELTAASPDDEPEPREDDGRPKRFAYPPQLVVVDGGQPQVAAARRALDELGIDDIAVCGLAKRLEEVWLPDDDDPVVLPRSSEGLYLLQRVRDEAHRFAITYQRAKRAKRIRSSPLDDVTGLGETRKQALIKHFGSVKKLRQATIDEICEVPGIGRRTAESVVAALATTAPAAPAVNTATGEIIEEDDGGSS</sequence>
<keyword id="KW-0963">Cytoplasm</keyword>
<keyword id="KW-0227">DNA damage</keyword>
<keyword id="KW-0228">DNA excision</keyword>
<keyword id="KW-0234">DNA repair</keyword>
<keyword id="KW-0267">Excision nuclease</keyword>
<keyword id="KW-0742">SOS response</keyword>
<proteinExistence type="inferred from homology"/>
<comment type="function">
    <text evidence="1">The UvrABC repair system catalyzes the recognition and processing of DNA lesions. UvrC both incises the 5' and 3' sides of the lesion. The N-terminal half is responsible for the 3' incision and the C-terminal half is responsible for the 5' incision.</text>
</comment>
<comment type="subunit">
    <text evidence="1">Interacts with UvrB in an incision complex.</text>
</comment>
<comment type="subcellular location">
    <subcellularLocation>
        <location evidence="1">Cytoplasm</location>
    </subcellularLocation>
</comment>
<comment type="similarity">
    <text evidence="1">Belongs to the UvrC family.</text>
</comment>
<gene>
    <name evidence="1" type="primary">uvrC</name>
    <name type="ordered locus">SGR_5569</name>
</gene>
<feature type="chain" id="PRO_1000099521" description="UvrABC system protein C">
    <location>
        <begin position="1"/>
        <end position="717"/>
    </location>
</feature>
<feature type="domain" description="GIY-YIG" evidence="1">
    <location>
        <begin position="16"/>
        <end position="95"/>
    </location>
</feature>
<feature type="domain" description="UVR" evidence="1">
    <location>
        <begin position="208"/>
        <end position="243"/>
    </location>
</feature>
<feature type="region of interest" description="Disordered" evidence="2">
    <location>
        <begin position="467"/>
        <end position="548"/>
    </location>
</feature>
<feature type="compositionally biased region" description="Low complexity" evidence="2">
    <location>
        <begin position="477"/>
        <end position="522"/>
    </location>
</feature>
<dbReference type="EMBL" id="AP009493">
    <property type="protein sequence ID" value="BAG22398.1"/>
    <property type="molecule type" value="Genomic_DNA"/>
</dbReference>
<dbReference type="RefSeq" id="WP_012381399.1">
    <property type="nucleotide sequence ID" value="NC_010572.1"/>
</dbReference>
<dbReference type="SMR" id="B1W0Y8"/>
<dbReference type="KEGG" id="sgr:SGR_5569"/>
<dbReference type="PATRIC" id="fig|455632.4.peg.5704"/>
<dbReference type="eggNOG" id="COG0322">
    <property type="taxonomic scope" value="Bacteria"/>
</dbReference>
<dbReference type="HOGENOM" id="CLU_014841_1_1_11"/>
<dbReference type="Proteomes" id="UP000001685">
    <property type="component" value="Chromosome"/>
</dbReference>
<dbReference type="GO" id="GO:0005737">
    <property type="term" value="C:cytoplasm"/>
    <property type="evidence" value="ECO:0007669"/>
    <property type="project" value="UniProtKB-SubCell"/>
</dbReference>
<dbReference type="GO" id="GO:0009380">
    <property type="term" value="C:excinuclease repair complex"/>
    <property type="evidence" value="ECO:0007669"/>
    <property type="project" value="InterPro"/>
</dbReference>
<dbReference type="GO" id="GO:0003677">
    <property type="term" value="F:DNA binding"/>
    <property type="evidence" value="ECO:0007669"/>
    <property type="project" value="UniProtKB-UniRule"/>
</dbReference>
<dbReference type="GO" id="GO:0009381">
    <property type="term" value="F:excinuclease ABC activity"/>
    <property type="evidence" value="ECO:0007669"/>
    <property type="project" value="UniProtKB-UniRule"/>
</dbReference>
<dbReference type="GO" id="GO:0006289">
    <property type="term" value="P:nucleotide-excision repair"/>
    <property type="evidence" value="ECO:0007669"/>
    <property type="project" value="UniProtKB-UniRule"/>
</dbReference>
<dbReference type="GO" id="GO:0009432">
    <property type="term" value="P:SOS response"/>
    <property type="evidence" value="ECO:0007669"/>
    <property type="project" value="UniProtKB-UniRule"/>
</dbReference>
<dbReference type="CDD" id="cd10434">
    <property type="entry name" value="GIY-YIG_UvrC_Cho"/>
    <property type="match status" value="1"/>
</dbReference>
<dbReference type="FunFam" id="3.40.1440.10:FF:000001">
    <property type="entry name" value="UvrABC system protein C"/>
    <property type="match status" value="1"/>
</dbReference>
<dbReference type="Gene3D" id="1.10.150.20">
    <property type="entry name" value="5' to 3' exonuclease, C-terminal subdomain"/>
    <property type="match status" value="1"/>
</dbReference>
<dbReference type="Gene3D" id="3.40.1440.10">
    <property type="entry name" value="GIY-YIG endonuclease"/>
    <property type="match status" value="1"/>
</dbReference>
<dbReference type="Gene3D" id="4.10.860.10">
    <property type="entry name" value="UVR domain"/>
    <property type="match status" value="1"/>
</dbReference>
<dbReference type="Gene3D" id="3.30.420.340">
    <property type="entry name" value="UvrC, RNAse H endonuclease domain"/>
    <property type="match status" value="1"/>
</dbReference>
<dbReference type="HAMAP" id="MF_00203">
    <property type="entry name" value="UvrC"/>
    <property type="match status" value="1"/>
</dbReference>
<dbReference type="InterPro" id="IPR000305">
    <property type="entry name" value="GIY-YIG_endonuc"/>
</dbReference>
<dbReference type="InterPro" id="IPR035901">
    <property type="entry name" value="GIY-YIG_endonuc_sf"/>
</dbReference>
<dbReference type="InterPro" id="IPR047296">
    <property type="entry name" value="GIY-YIG_UvrC_Cho"/>
</dbReference>
<dbReference type="InterPro" id="IPR003583">
    <property type="entry name" value="Hlx-hairpin-Hlx_DNA-bd_motif"/>
</dbReference>
<dbReference type="InterPro" id="IPR010994">
    <property type="entry name" value="RuvA_2-like"/>
</dbReference>
<dbReference type="InterPro" id="IPR001943">
    <property type="entry name" value="UVR_dom"/>
</dbReference>
<dbReference type="InterPro" id="IPR036876">
    <property type="entry name" value="UVR_dom_sf"/>
</dbReference>
<dbReference type="InterPro" id="IPR050066">
    <property type="entry name" value="UvrABC_protein_C"/>
</dbReference>
<dbReference type="InterPro" id="IPR004791">
    <property type="entry name" value="UvrC"/>
</dbReference>
<dbReference type="InterPro" id="IPR001162">
    <property type="entry name" value="UvrC_RNase_H_dom"/>
</dbReference>
<dbReference type="InterPro" id="IPR038476">
    <property type="entry name" value="UvrC_RNase_H_dom_sf"/>
</dbReference>
<dbReference type="NCBIfam" id="NF001824">
    <property type="entry name" value="PRK00558.1-5"/>
    <property type="match status" value="1"/>
</dbReference>
<dbReference type="NCBIfam" id="TIGR00194">
    <property type="entry name" value="uvrC"/>
    <property type="match status" value="1"/>
</dbReference>
<dbReference type="PANTHER" id="PTHR30562:SF1">
    <property type="entry name" value="UVRABC SYSTEM PROTEIN C"/>
    <property type="match status" value="1"/>
</dbReference>
<dbReference type="PANTHER" id="PTHR30562">
    <property type="entry name" value="UVRC/OXIDOREDUCTASE"/>
    <property type="match status" value="1"/>
</dbReference>
<dbReference type="Pfam" id="PF01541">
    <property type="entry name" value="GIY-YIG"/>
    <property type="match status" value="1"/>
</dbReference>
<dbReference type="Pfam" id="PF14520">
    <property type="entry name" value="HHH_5"/>
    <property type="match status" value="1"/>
</dbReference>
<dbReference type="Pfam" id="PF02151">
    <property type="entry name" value="UVR"/>
    <property type="match status" value="1"/>
</dbReference>
<dbReference type="Pfam" id="PF22920">
    <property type="entry name" value="UvrC_RNaseH"/>
    <property type="match status" value="1"/>
</dbReference>
<dbReference type="Pfam" id="PF08459">
    <property type="entry name" value="UvrC_RNaseH_dom"/>
    <property type="match status" value="1"/>
</dbReference>
<dbReference type="SMART" id="SM00465">
    <property type="entry name" value="GIYc"/>
    <property type="match status" value="1"/>
</dbReference>
<dbReference type="SMART" id="SM00278">
    <property type="entry name" value="HhH1"/>
    <property type="match status" value="2"/>
</dbReference>
<dbReference type="SUPFAM" id="SSF46600">
    <property type="entry name" value="C-terminal UvrC-binding domain of UvrB"/>
    <property type="match status" value="1"/>
</dbReference>
<dbReference type="SUPFAM" id="SSF82771">
    <property type="entry name" value="GIY-YIG endonuclease"/>
    <property type="match status" value="1"/>
</dbReference>
<dbReference type="SUPFAM" id="SSF47781">
    <property type="entry name" value="RuvA domain 2-like"/>
    <property type="match status" value="1"/>
</dbReference>
<dbReference type="PROSITE" id="PS50164">
    <property type="entry name" value="GIY_YIG"/>
    <property type="match status" value="1"/>
</dbReference>
<dbReference type="PROSITE" id="PS50151">
    <property type="entry name" value="UVR"/>
    <property type="match status" value="1"/>
</dbReference>
<dbReference type="PROSITE" id="PS50165">
    <property type="entry name" value="UVRC"/>
    <property type="match status" value="1"/>
</dbReference>
<reference key="1">
    <citation type="journal article" date="2008" name="J. Bacteriol.">
        <title>Genome sequence of the streptomycin-producing microorganism Streptomyces griseus IFO 13350.</title>
        <authorList>
            <person name="Ohnishi Y."/>
            <person name="Ishikawa J."/>
            <person name="Hara H."/>
            <person name="Suzuki H."/>
            <person name="Ikenoya M."/>
            <person name="Ikeda H."/>
            <person name="Yamashita A."/>
            <person name="Hattori M."/>
            <person name="Horinouchi S."/>
        </authorList>
    </citation>
    <scope>NUCLEOTIDE SEQUENCE [LARGE SCALE GENOMIC DNA]</scope>
    <source>
        <strain>JCM 4626 / CBS 651.72 / NBRC 13350 / KCC S-0626 / ISP 5235</strain>
    </source>
</reference>
<name>UVRC_STRGG</name>